<reference key="1">
    <citation type="journal article" date="2006" name="Proc. Natl. Acad. Sci. U.S.A.">
        <title>Identification of genes subject to positive selection in uropathogenic strains of Escherichia coli: a comparative genomics approach.</title>
        <authorList>
            <person name="Chen S.L."/>
            <person name="Hung C.-S."/>
            <person name="Xu J."/>
            <person name="Reigstad C.S."/>
            <person name="Magrini V."/>
            <person name="Sabo A."/>
            <person name="Blasiar D."/>
            <person name="Bieri T."/>
            <person name="Meyer R.R."/>
            <person name="Ozersky P."/>
            <person name="Armstrong J.R."/>
            <person name="Fulton R.S."/>
            <person name="Latreille J.P."/>
            <person name="Spieth J."/>
            <person name="Hooton T.M."/>
            <person name="Mardis E.R."/>
            <person name="Hultgren S.J."/>
            <person name="Gordon J.I."/>
        </authorList>
    </citation>
    <scope>NUCLEOTIDE SEQUENCE [LARGE SCALE GENOMIC DNA]</scope>
    <source>
        <strain>UTI89 / UPEC</strain>
    </source>
</reference>
<comment type="function">
    <text evidence="1">RNaseP catalyzes the removal of the 5'-leader sequence from pre-tRNA to produce the mature 5'-terminus. It can also cleave other RNA substrates such as 4.5S RNA. The protein component plays an auxiliary but essential role in vivo by binding to the 5'-leader sequence and broadening the substrate specificity of the ribozyme.</text>
</comment>
<comment type="catalytic activity">
    <reaction evidence="1">
        <text>Endonucleolytic cleavage of RNA, removing 5'-extranucleotides from tRNA precursor.</text>
        <dbReference type="EC" id="3.1.26.5"/>
    </reaction>
</comment>
<comment type="subunit">
    <text evidence="1">Consists of a catalytic RNA component (M1 or rnpB) and a protein subunit.</text>
</comment>
<comment type="similarity">
    <text evidence="1">Belongs to the RnpA family.</text>
</comment>
<gene>
    <name evidence="1" type="primary">rnpA</name>
    <name type="ordered locus">UTI89_C4255</name>
</gene>
<keyword id="KW-0255">Endonuclease</keyword>
<keyword id="KW-0378">Hydrolase</keyword>
<keyword id="KW-0540">Nuclease</keyword>
<keyword id="KW-0694">RNA-binding</keyword>
<keyword id="KW-0819">tRNA processing</keyword>
<proteinExistence type="inferred from homology"/>
<protein>
    <recommendedName>
        <fullName evidence="1">Ribonuclease P protein component</fullName>
        <shortName evidence="1">RNase P protein</shortName>
        <shortName evidence="1">RNaseP protein</shortName>
        <ecNumber evidence="1">3.1.26.5</ecNumber>
    </recommendedName>
    <alternativeName>
        <fullName evidence="1">Protein C5</fullName>
    </alternativeName>
</protein>
<feature type="chain" id="PRO_1000021406" description="Ribonuclease P protein component">
    <location>
        <begin position="1"/>
        <end position="119"/>
    </location>
</feature>
<sequence length="119" mass="13789">MVKLAFPRELRLLTPSQFTFVFQQPQRAGTPQITILGRLNSLGHPRIGLTVAKKNVRRAHERNRIKRLTRESFRLRQHELPAMDFVVVAKKGVADLDNRALSEALEKLWRRHCRLARGS</sequence>
<evidence type="ECO:0000255" key="1">
    <source>
        <dbReference type="HAMAP-Rule" id="MF_00227"/>
    </source>
</evidence>
<name>RNPA_ECOUT</name>
<dbReference type="EC" id="3.1.26.5" evidence="1"/>
<dbReference type="EMBL" id="CP000243">
    <property type="protein sequence ID" value="ABE09682.1"/>
    <property type="molecule type" value="Genomic_DNA"/>
</dbReference>
<dbReference type="RefSeq" id="WP_000239730.1">
    <property type="nucleotide sequence ID" value="NZ_CP064825.1"/>
</dbReference>
<dbReference type="SMR" id="Q1R4N2"/>
<dbReference type="GeneID" id="93778446"/>
<dbReference type="KEGG" id="eci:UTI89_C4255"/>
<dbReference type="HOGENOM" id="CLU_117179_11_0_6"/>
<dbReference type="Proteomes" id="UP000001952">
    <property type="component" value="Chromosome"/>
</dbReference>
<dbReference type="GO" id="GO:0030677">
    <property type="term" value="C:ribonuclease P complex"/>
    <property type="evidence" value="ECO:0007669"/>
    <property type="project" value="TreeGrafter"/>
</dbReference>
<dbReference type="GO" id="GO:0042781">
    <property type="term" value="F:3'-tRNA processing endoribonuclease activity"/>
    <property type="evidence" value="ECO:0007669"/>
    <property type="project" value="TreeGrafter"/>
</dbReference>
<dbReference type="GO" id="GO:0004526">
    <property type="term" value="F:ribonuclease P activity"/>
    <property type="evidence" value="ECO:0007669"/>
    <property type="project" value="UniProtKB-UniRule"/>
</dbReference>
<dbReference type="GO" id="GO:0000049">
    <property type="term" value="F:tRNA binding"/>
    <property type="evidence" value="ECO:0007669"/>
    <property type="project" value="UniProtKB-UniRule"/>
</dbReference>
<dbReference type="GO" id="GO:0001682">
    <property type="term" value="P:tRNA 5'-leader removal"/>
    <property type="evidence" value="ECO:0007669"/>
    <property type="project" value="UniProtKB-UniRule"/>
</dbReference>
<dbReference type="FunFam" id="3.30.230.10:FF:000016">
    <property type="entry name" value="Ribonuclease P protein component"/>
    <property type="match status" value="1"/>
</dbReference>
<dbReference type="Gene3D" id="3.30.230.10">
    <property type="match status" value="1"/>
</dbReference>
<dbReference type="HAMAP" id="MF_00227">
    <property type="entry name" value="RNase_P"/>
    <property type="match status" value="1"/>
</dbReference>
<dbReference type="InterPro" id="IPR020568">
    <property type="entry name" value="Ribosomal_Su5_D2-typ_SF"/>
</dbReference>
<dbReference type="InterPro" id="IPR014721">
    <property type="entry name" value="Ribsml_uS5_D2-typ_fold_subgr"/>
</dbReference>
<dbReference type="InterPro" id="IPR000100">
    <property type="entry name" value="RNase_P"/>
</dbReference>
<dbReference type="InterPro" id="IPR020539">
    <property type="entry name" value="RNase_P_CS"/>
</dbReference>
<dbReference type="NCBIfam" id="TIGR00188">
    <property type="entry name" value="rnpA"/>
    <property type="match status" value="1"/>
</dbReference>
<dbReference type="PANTHER" id="PTHR33992">
    <property type="entry name" value="RIBONUCLEASE P PROTEIN COMPONENT"/>
    <property type="match status" value="1"/>
</dbReference>
<dbReference type="PANTHER" id="PTHR33992:SF1">
    <property type="entry name" value="RIBONUCLEASE P PROTEIN COMPONENT"/>
    <property type="match status" value="1"/>
</dbReference>
<dbReference type="Pfam" id="PF00825">
    <property type="entry name" value="Ribonuclease_P"/>
    <property type="match status" value="1"/>
</dbReference>
<dbReference type="SUPFAM" id="SSF54211">
    <property type="entry name" value="Ribosomal protein S5 domain 2-like"/>
    <property type="match status" value="1"/>
</dbReference>
<dbReference type="PROSITE" id="PS00648">
    <property type="entry name" value="RIBONUCLEASE_P"/>
    <property type="match status" value="1"/>
</dbReference>
<organism>
    <name type="scientific">Escherichia coli (strain UTI89 / UPEC)</name>
    <dbReference type="NCBI Taxonomy" id="364106"/>
    <lineage>
        <taxon>Bacteria</taxon>
        <taxon>Pseudomonadati</taxon>
        <taxon>Pseudomonadota</taxon>
        <taxon>Gammaproteobacteria</taxon>
        <taxon>Enterobacterales</taxon>
        <taxon>Enterobacteriaceae</taxon>
        <taxon>Escherichia</taxon>
    </lineage>
</organism>
<accession>Q1R4N2</accession>